<gene>
    <name type="primary">Muc13</name>
    <name type="synonym">Ly64</name>
</gene>
<organism>
    <name type="scientific">Mus musculus</name>
    <name type="common">Mouse</name>
    <dbReference type="NCBI Taxonomy" id="10090"/>
    <lineage>
        <taxon>Eukaryota</taxon>
        <taxon>Metazoa</taxon>
        <taxon>Chordata</taxon>
        <taxon>Craniata</taxon>
        <taxon>Vertebrata</taxon>
        <taxon>Euteleostomi</taxon>
        <taxon>Mammalia</taxon>
        <taxon>Eutheria</taxon>
        <taxon>Euarchontoglires</taxon>
        <taxon>Glires</taxon>
        <taxon>Rodentia</taxon>
        <taxon>Myomorpha</taxon>
        <taxon>Muroidea</taxon>
        <taxon>Muridae</taxon>
        <taxon>Murinae</taxon>
        <taxon>Mus</taxon>
        <taxon>Mus</taxon>
    </lineage>
</organism>
<name>MUC13_MOUSE</name>
<reference key="1">
    <citation type="journal article" date="1989" name="J. Biol. Chem.">
        <title>Molecular cloning of 114/A10, a cell surface antigen containing highly conserved repeated elements, which is expressed by murine hemopoietic progenitor cells and interleukin-3-dependent cell lines.</title>
        <authorList>
            <person name="Dougherty G.J."/>
            <person name="Kay R.J."/>
            <person name="Humphries R.K."/>
        </authorList>
    </citation>
    <scope>NUCLEOTIDE SEQUENCE [MRNA]</scope>
</reference>
<reference key="2">
    <citation type="journal article" date="2004" name="Genome Res.">
        <title>The status, quality, and expansion of the NIH full-length cDNA project: the Mammalian Gene Collection (MGC).</title>
        <authorList>
            <consortium name="The MGC Project Team"/>
        </authorList>
    </citation>
    <scope>NUCLEOTIDE SEQUENCE [LARGE SCALE MRNA]</scope>
    <source>
        <strain>FVB/N</strain>
        <tissue>Colon</tissue>
    </source>
</reference>
<protein>
    <recommendedName>
        <fullName>Mucin-13</fullName>
        <shortName>MUC-13</shortName>
    </recommendedName>
    <alternativeName>
        <fullName>Cell surface antigen 114/A10</fullName>
    </alternativeName>
    <alternativeName>
        <fullName>Lymphocyte antigen 64</fullName>
    </alternativeName>
</protein>
<sequence>MKGFLLLSLSLLLVTVGSSSQASSTTSSSGGTSPPTTVQSQSPGSSSQASTTTSSSGGASPPTTVQSQSPGSSSQASTTTSSSGGASPPTTVQSQSPGSSSQASTTTSSSGGASPPTTVQSQSPGSSSQASTTTSSSGGASPPTTVQSQSPGSSSQASTTTSSSGGASPPTTVQSQSPGSSSQVSTTTSSSGGASPPTTVQSQSPGSSSQPGPTQPSGGASSSTVPSGGSTGPSDLCNPNPCKGTASCVKLHSKHFCLCLEGYYYNSSLSSCVKGTTFPGDISMSVSETANLEDENSVGYQELYNSVTDFFETTFNKTDYGQTVIIKVSTAPSRSARSAMRDATKDVSVSVVNIFGADTKETEKSVSSAIETAIKTSGNVKDYVSINLCDHYGCVGNDSSKCQDILQCTCKPGLDRLNPQVPFCVAVTCSQPCNAEEKEQCLKMDNGVMDCVCMPGYQRANGNRKCEECPFGYSGMNCKDQFQLILTIVGTIAGALILILLIAFIVSARSKNKKKDGEEQRLIEDDFHNLRLRQTGFSNLGADNSIFPKVRTGVPSQTPNPYANQRSMPRPDY</sequence>
<keyword id="KW-1003">Cell membrane</keyword>
<keyword id="KW-1015">Disulfide bond</keyword>
<keyword id="KW-0245">EGF-like domain</keyword>
<keyword id="KW-0325">Glycoprotein</keyword>
<keyword id="KW-0472">Membrane</keyword>
<keyword id="KW-1185">Reference proteome</keyword>
<keyword id="KW-0677">Repeat</keyword>
<keyword id="KW-0964">Secreted</keyword>
<keyword id="KW-0732">Signal</keyword>
<keyword id="KW-0812">Transmembrane</keyword>
<keyword id="KW-1133">Transmembrane helix</keyword>
<proteinExistence type="evidence at transcript level"/>
<comment type="function">
    <text evidence="1">Epithelial and hemopoietic transmembrane mucin that may play a role in cell signaling.</text>
</comment>
<comment type="subunit">
    <text evidence="1">Homodimer of beta subunits.</text>
</comment>
<comment type="subcellular location">
    <subcellularLocation>
        <location evidence="6">Cell membrane</location>
        <topology evidence="6">Single-pass type I membrane protein</topology>
    </subcellularLocation>
    <subcellularLocation>
        <location evidence="1">Secreted</location>
    </subcellularLocation>
    <text evidence="1">Also exists as a soluble form.</text>
</comment>
<comment type="PTM">
    <text evidence="1">Cleaved into two subunits, alpha and beta, probably between the first EGF domain and the SEA domain. Beta subunit contains the cytoplasmic tail and alpha subunit the extracellular tail. The homooligomerization into dimers is dependent on intrachain disulfide bonds (By similarity).</text>
</comment>
<comment type="PTM">
    <text evidence="1">Highly N-glycosylated.</text>
</comment>
<dbReference type="EMBL" id="J04634">
    <property type="protein sequence ID" value="AAA37239.1"/>
    <property type="molecule type" value="mRNA"/>
</dbReference>
<dbReference type="EMBL" id="BC024321">
    <property type="protein sequence ID" value="AAH24321.1"/>
    <property type="molecule type" value="mRNA"/>
</dbReference>
<dbReference type="CCDS" id="CCDS28134.1"/>
<dbReference type="PIR" id="A33533">
    <property type="entry name" value="A33533"/>
</dbReference>
<dbReference type="RefSeq" id="NP_001369763.1">
    <property type="nucleotide sequence ID" value="NM_001382834.1"/>
</dbReference>
<dbReference type="RefSeq" id="NP_034869.1">
    <property type="nucleotide sequence ID" value="NM_010739.2"/>
</dbReference>
<dbReference type="RefSeq" id="XP_011244137.1">
    <property type="nucleotide sequence ID" value="XM_011245835.1"/>
</dbReference>
<dbReference type="BioGRID" id="201238">
    <property type="interactions" value="1"/>
</dbReference>
<dbReference type="FunCoup" id="P19467">
    <property type="interactions" value="32"/>
</dbReference>
<dbReference type="STRING" id="10090.ENSMUSP00000110696"/>
<dbReference type="GlyCosmos" id="P19467">
    <property type="glycosylation" value="3 sites, No reported glycans"/>
</dbReference>
<dbReference type="GlyGen" id="P19467">
    <property type="glycosylation" value="4 sites"/>
</dbReference>
<dbReference type="iPTMnet" id="P19467"/>
<dbReference type="PhosphoSitePlus" id="P19467"/>
<dbReference type="PaxDb" id="10090-ENSMUSP00000110696"/>
<dbReference type="PeptideAtlas" id="P19467"/>
<dbReference type="ProteomicsDB" id="290070"/>
<dbReference type="Antibodypedia" id="33002">
    <property type="antibodies" value="328 antibodies from 32 providers"/>
</dbReference>
<dbReference type="Ensembl" id="ENSMUST00000023520.7">
    <property type="protein sequence ID" value="ENSMUSP00000023520.7"/>
    <property type="gene ID" value="ENSMUSG00000022824.13"/>
</dbReference>
<dbReference type="Ensembl" id="ENSMUST00000115044.8">
    <property type="protein sequence ID" value="ENSMUSP00000110696.2"/>
    <property type="gene ID" value="ENSMUSG00000022824.13"/>
</dbReference>
<dbReference type="GeneID" id="17063"/>
<dbReference type="KEGG" id="mmu:17063"/>
<dbReference type="UCSC" id="uc007zal.1">
    <property type="organism name" value="mouse"/>
</dbReference>
<dbReference type="AGR" id="MGI:103190"/>
<dbReference type="CTD" id="56667"/>
<dbReference type="MGI" id="MGI:103190">
    <property type="gene designation" value="Muc13"/>
</dbReference>
<dbReference type="VEuPathDB" id="HostDB:ENSMUSG00000022824"/>
<dbReference type="eggNOG" id="ENOG502S3PG">
    <property type="taxonomic scope" value="Eukaryota"/>
</dbReference>
<dbReference type="GeneTree" id="ENSGT00940000154419"/>
<dbReference type="HOGENOM" id="CLU_020534_1_0_1"/>
<dbReference type="InParanoid" id="P19467"/>
<dbReference type="OMA" id="HKQCLIK"/>
<dbReference type="OrthoDB" id="8938333at2759"/>
<dbReference type="PhylomeDB" id="P19467"/>
<dbReference type="TreeFam" id="TF335941"/>
<dbReference type="Reactome" id="R-MMU-913709">
    <property type="pathway name" value="O-linked glycosylation of mucins"/>
</dbReference>
<dbReference type="Reactome" id="R-MMU-9696264">
    <property type="pathway name" value="RND3 GTPase cycle"/>
</dbReference>
<dbReference type="Reactome" id="R-MMU-9696270">
    <property type="pathway name" value="RND2 GTPase cycle"/>
</dbReference>
<dbReference type="Reactome" id="R-MMU-9696273">
    <property type="pathway name" value="RND1 GTPase cycle"/>
</dbReference>
<dbReference type="Reactome" id="R-MMU-977068">
    <property type="pathway name" value="Termination of O-glycan biosynthesis"/>
</dbReference>
<dbReference type="BioGRID-ORCS" id="17063">
    <property type="hits" value="0 hits in 79 CRISPR screens"/>
</dbReference>
<dbReference type="PRO" id="PR:P19467"/>
<dbReference type="Proteomes" id="UP000000589">
    <property type="component" value="Chromosome 16"/>
</dbReference>
<dbReference type="RNAct" id="P19467">
    <property type="molecule type" value="protein"/>
</dbReference>
<dbReference type="Bgee" id="ENSMUSG00000022824">
    <property type="expression patterns" value="Expressed in small intestine Peyer's patch and 96 other cell types or tissues"/>
</dbReference>
<dbReference type="ExpressionAtlas" id="P19467">
    <property type="expression patterns" value="baseline and differential"/>
</dbReference>
<dbReference type="GO" id="GO:0005576">
    <property type="term" value="C:extracellular region"/>
    <property type="evidence" value="ECO:0007669"/>
    <property type="project" value="UniProtKB-SubCell"/>
</dbReference>
<dbReference type="GO" id="GO:0005886">
    <property type="term" value="C:plasma membrane"/>
    <property type="evidence" value="ECO:0007669"/>
    <property type="project" value="UniProtKB-SubCell"/>
</dbReference>
<dbReference type="InterPro" id="IPR000742">
    <property type="entry name" value="EGF-like_dom"/>
</dbReference>
<dbReference type="InterPro" id="IPR009030">
    <property type="entry name" value="Growth_fac_rcpt_cys_sf"/>
</dbReference>
<dbReference type="InterPro" id="IPR000082">
    <property type="entry name" value="SEA_dom"/>
</dbReference>
<dbReference type="PANTHER" id="PTHR24037">
    <property type="entry name" value="HEART DEVELOPMENT PROTEIN WITH EGF-LIKE DOMAINS 1"/>
    <property type="match status" value="1"/>
</dbReference>
<dbReference type="PANTHER" id="PTHR24037:SF10">
    <property type="entry name" value="MUCIN-13"/>
    <property type="match status" value="1"/>
</dbReference>
<dbReference type="SMART" id="SM00181">
    <property type="entry name" value="EGF"/>
    <property type="match status" value="3"/>
</dbReference>
<dbReference type="SMART" id="SM00200">
    <property type="entry name" value="SEA"/>
    <property type="match status" value="1"/>
</dbReference>
<dbReference type="SUPFAM" id="SSF57184">
    <property type="entry name" value="Growth factor receptor domain"/>
    <property type="match status" value="1"/>
</dbReference>
<dbReference type="PROSITE" id="PS01186">
    <property type="entry name" value="EGF_2"/>
    <property type="match status" value="2"/>
</dbReference>
<dbReference type="PROSITE" id="PS50026">
    <property type="entry name" value="EGF_3"/>
    <property type="match status" value="1"/>
</dbReference>
<dbReference type="PROSITE" id="PS50024">
    <property type="entry name" value="SEA"/>
    <property type="match status" value="1"/>
</dbReference>
<feature type="signal peptide" evidence="2">
    <location>
        <begin position="1"/>
        <end position="17"/>
    </location>
</feature>
<feature type="chain" id="PRO_0000019285" description="Mucin-13">
    <location>
        <begin position="18"/>
        <end position="573"/>
    </location>
</feature>
<feature type="topological domain" description="Extracellular" evidence="2">
    <location>
        <begin position="18"/>
        <end position="480"/>
    </location>
</feature>
<feature type="transmembrane region" description="Helical" evidence="2">
    <location>
        <begin position="481"/>
        <end position="508"/>
    </location>
</feature>
<feature type="topological domain" description="Cytoplasmic" evidence="2">
    <location>
        <begin position="509"/>
        <end position="573"/>
    </location>
</feature>
<feature type="domain" description="EGF-like 1" evidence="3">
    <location>
        <begin position="233"/>
        <end position="273"/>
    </location>
</feature>
<feature type="domain" description="SEA" evidence="4">
    <location>
        <begin position="274"/>
        <end position="391"/>
    </location>
</feature>
<feature type="domain" description="EGF-like 2" evidence="3">
    <location>
        <begin position="385"/>
        <end position="425"/>
    </location>
</feature>
<feature type="domain" description="EGF-like 3" evidence="3">
    <location>
        <begin position="425"/>
        <end position="467"/>
    </location>
</feature>
<feature type="region of interest" description="Disordered" evidence="5">
    <location>
        <begin position="16"/>
        <end position="237"/>
    </location>
</feature>
<feature type="region of interest" description="Disordered" evidence="5">
    <location>
        <begin position="548"/>
        <end position="573"/>
    </location>
</feature>
<feature type="compositionally biased region" description="Low complexity" evidence="5">
    <location>
        <begin position="16"/>
        <end position="234"/>
    </location>
</feature>
<feature type="compositionally biased region" description="Polar residues" evidence="5">
    <location>
        <begin position="554"/>
        <end position="567"/>
    </location>
</feature>
<feature type="glycosylation site" description="N-linked (GlcNAc...) asparagine" evidence="2">
    <location>
        <position position="266"/>
    </location>
</feature>
<feature type="glycosylation site" description="N-linked (GlcNAc...) asparagine" evidence="2">
    <location>
        <position position="316"/>
    </location>
</feature>
<feature type="glycosylation site" description="N-linked (GlcNAc...) asparagine" evidence="2">
    <location>
        <position position="397"/>
    </location>
</feature>
<feature type="disulfide bond" evidence="3">
    <location>
        <begin position="237"/>
        <end position="248"/>
    </location>
</feature>
<feature type="disulfide bond" evidence="3">
    <location>
        <begin position="242"/>
        <end position="257"/>
    </location>
</feature>
<feature type="disulfide bond" evidence="3">
    <location>
        <begin position="259"/>
        <end position="272"/>
    </location>
</feature>
<feature type="disulfide bond" evidence="3">
    <location>
        <begin position="389"/>
        <end position="402"/>
    </location>
</feature>
<feature type="disulfide bond" evidence="3">
    <location>
        <begin position="394"/>
        <end position="408"/>
    </location>
</feature>
<feature type="disulfide bond" evidence="3">
    <location>
        <begin position="410"/>
        <end position="424"/>
    </location>
</feature>
<feature type="disulfide bond" evidence="3">
    <location>
        <begin position="429"/>
        <end position="441"/>
    </location>
</feature>
<feature type="disulfide bond" evidence="3">
    <location>
        <begin position="433"/>
        <end position="451"/>
    </location>
</feature>
<feature type="disulfide bond" evidence="3">
    <location>
        <begin position="453"/>
        <end position="466"/>
    </location>
</feature>
<evidence type="ECO:0000250" key="1"/>
<evidence type="ECO:0000255" key="2"/>
<evidence type="ECO:0000255" key="3">
    <source>
        <dbReference type="PROSITE-ProRule" id="PRU00076"/>
    </source>
</evidence>
<evidence type="ECO:0000255" key="4">
    <source>
        <dbReference type="PROSITE-ProRule" id="PRU00188"/>
    </source>
</evidence>
<evidence type="ECO:0000256" key="5">
    <source>
        <dbReference type="SAM" id="MobiDB-lite"/>
    </source>
</evidence>
<evidence type="ECO:0000305" key="6"/>
<accession>P19467</accession>